<reference key="1">
    <citation type="journal article" date="2004" name="Nucleic Acids Res.">
        <title>Thermoadaptation trait revealed by the genome sequence of thermophilic Geobacillus kaustophilus.</title>
        <authorList>
            <person name="Takami H."/>
            <person name="Takaki Y."/>
            <person name="Chee G.-J."/>
            <person name="Nishi S."/>
            <person name="Shimamura S."/>
            <person name="Suzuki H."/>
            <person name="Matsui S."/>
            <person name="Uchiyama I."/>
        </authorList>
    </citation>
    <scope>NUCLEOTIDE SEQUENCE [LARGE SCALE GENOMIC DNA]</scope>
    <source>
        <strain>HTA426</strain>
    </source>
</reference>
<comment type="function">
    <text evidence="1">One of the primary rRNA binding proteins, it binds directly to 16S rRNA where it nucleates assembly of the body of the 30S subunit.</text>
</comment>
<comment type="function">
    <text evidence="1">With S5 and S12 plays an important role in translational accuracy.</text>
</comment>
<comment type="subunit">
    <text evidence="1">Part of the 30S ribosomal subunit. Contacts protein S5. The interaction surface between S4 and S5 is involved in control of translational fidelity.</text>
</comment>
<comment type="similarity">
    <text evidence="1">Belongs to the universal ribosomal protein uS4 family.</text>
</comment>
<organism>
    <name type="scientific">Geobacillus kaustophilus (strain HTA426)</name>
    <dbReference type="NCBI Taxonomy" id="235909"/>
    <lineage>
        <taxon>Bacteria</taxon>
        <taxon>Bacillati</taxon>
        <taxon>Bacillota</taxon>
        <taxon>Bacilli</taxon>
        <taxon>Bacillales</taxon>
        <taxon>Anoxybacillaceae</taxon>
        <taxon>Geobacillus</taxon>
        <taxon>Geobacillus thermoleovorans group</taxon>
    </lineage>
</organism>
<feature type="chain" id="PRO_0000132387" description="Small ribosomal subunit protein uS4">
    <location>
        <begin position="1"/>
        <end position="200"/>
    </location>
</feature>
<feature type="domain" description="S4 RNA-binding" evidence="1">
    <location>
        <begin position="92"/>
        <end position="152"/>
    </location>
</feature>
<feature type="region of interest" description="Disordered" evidence="2">
    <location>
        <begin position="22"/>
        <end position="42"/>
    </location>
</feature>
<proteinExistence type="inferred from homology"/>
<sequence length="200" mass="23209">MARYTGPMWKISRRLGISLSGTGKELQKRPYPPGQHGPGQRRKLSEYGLQLQEKQKLRHMYGVNERQFRKTFEEAGKMPGKHGENFMILLESRLDNLVYRLGLARTRRQARQLVTHGHILVDGSRVNIPSYRVKPGQTIAVREKSRNLQVIKEALEANNYIPDYLTFNPEKMEGTYTRLPERSELPAEINEALIVEFYSR</sequence>
<evidence type="ECO:0000255" key="1">
    <source>
        <dbReference type="HAMAP-Rule" id="MF_01306"/>
    </source>
</evidence>
<evidence type="ECO:0000256" key="2">
    <source>
        <dbReference type="SAM" id="MobiDB-lite"/>
    </source>
</evidence>
<evidence type="ECO:0000305" key="3"/>
<name>RS4_GEOKA</name>
<keyword id="KW-1185">Reference proteome</keyword>
<keyword id="KW-0687">Ribonucleoprotein</keyword>
<keyword id="KW-0689">Ribosomal protein</keyword>
<keyword id="KW-0694">RNA-binding</keyword>
<keyword id="KW-0699">rRNA-binding</keyword>
<accession>Q5KW49</accession>
<dbReference type="EMBL" id="BA000043">
    <property type="protein sequence ID" value="BAD77087.1"/>
    <property type="molecule type" value="Genomic_DNA"/>
</dbReference>
<dbReference type="RefSeq" id="WP_011232276.1">
    <property type="nucleotide sequence ID" value="NC_006510.1"/>
</dbReference>
<dbReference type="BMRB" id="Q5KW49"/>
<dbReference type="SMR" id="Q5KW49"/>
<dbReference type="STRING" id="235909.GK2802"/>
<dbReference type="GeneID" id="32064696"/>
<dbReference type="KEGG" id="gka:GK2802"/>
<dbReference type="eggNOG" id="COG0522">
    <property type="taxonomic scope" value="Bacteria"/>
</dbReference>
<dbReference type="HOGENOM" id="CLU_092403_0_1_9"/>
<dbReference type="Proteomes" id="UP000001172">
    <property type="component" value="Chromosome"/>
</dbReference>
<dbReference type="GO" id="GO:0015935">
    <property type="term" value="C:small ribosomal subunit"/>
    <property type="evidence" value="ECO:0007669"/>
    <property type="project" value="InterPro"/>
</dbReference>
<dbReference type="GO" id="GO:0019843">
    <property type="term" value="F:rRNA binding"/>
    <property type="evidence" value="ECO:0007669"/>
    <property type="project" value="UniProtKB-UniRule"/>
</dbReference>
<dbReference type="GO" id="GO:0003735">
    <property type="term" value="F:structural constituent of ribosome"/>
    <property type="evidence" value="ECO:0007669"/>
    <property type="project" value="InterPro"/>
</dbReference>
<dbReference type="GO" id="GO:0042274">
    <property type="term" value="P:ribosomal small subunit biogenesis"/>
    <property type="evidence" value="ECO:0007669"/>
    <property type="project" value="TreeGrafter"/>
</dbReference>
<dbReference type="GO" id="GO:0006412">
    <property type="term" value="P:translation"/>
    <property type="evidence" value="ECO:0007669"/>
    <property type="project" value="UniProtKB-UniRule"/>
</dbReference>
<dbReference type="CDD" id="cd00165">
    <property type="entry name" value="S4"/>
    <property type="match status" value="1"/>
</dbReference>
<dbReference type="FunFam" id="1.10.1050.10:FF:000001">
    <property type="entry name" value="30S ribosomal protein S4"/>
    <property type="match status" value="1"/>
</dbReference>
<dbReference type="FunFam" id="3.10.290.10:FF:000001">
    <property type="entry name" value="30S ribosomal protein S4"/>
    <property type="match status" value="1"/>
</dbReference>
<dbReference type="Gene3D" id="1.10.1050.10">
    <property type="entry name" value="Ribosomal Protein S4 Delta 41, Chain A, domain 1"/>
    <property type="match status" value="1"/>
</dbReference>
<dbReference type="Gene3D" id="3.10.290.10">
    <property type="entry name" value="RNA-binding S4 domain"/>
    <property type="match status" value="1"/>
</dbReference>
<dbReference type="HAMAP" id="MF_01306_B">
    <property type="entry name" value="Ribosomal_uS4_B"/>
    <property type="match status" value="1"/>
</dbReference>
<dbReference type="InterPro" id="IPR022801">
    <property type="entry name" value="Ribosomal_uS4"/>
</dbReference>
<dbReference type="InterPro" id="IPR005709">
    <property type="entry name" value="Ribosomal_uS4_bac-type"/>
</dbReference>
<dbReference type="InterPro" id="IPR018079">
    <property type="entry name" value="Ribosomal_uS4_CS"/>
</dbReference>
<dbReference type="InterPro" id="IPR001912">
    <property type="entry name" value="Ribosomal_uS4_N"/>
</dbReference>
<dbReference type="InterPro" id="IPR002942">
    <property type="entry name" value="S4_RNA-bd"/>
</dbReference>
<dbReference type="InterPro" id="IPR036986">
    <property type="entry name" value="S4_RNA-bd_sf"/>
</dbReference>
<dbReference type="NCBIfam" id="NF003717">
    <property type="entry name" value="PRK05327.1"/>
    <property type="match status" value="1"/>
</dbReference>
<dbReference type="NCBIfam" id="TIGR01017">
    <property type="entry name" value="rpsD_bact"/>
    <property type="match status" value="1"/>
</dbReference>
<dbReference type="PANTHER" id="PTHR11831">
    <property type="entry name" value="30S 40S RIBOSOMAL PROTEIN"/>
    <property type="match status" value="1"/>
</dbReference>
<dbReference type="PANTHER" id="PTHR11831:SF4">
    <property type="entry name" value="SMALL RIBOSOMAL SUBUNIT PROTEIN US4M"/>
    <property type="match status" value="1"/>
</dbReference>
<dbReference type="Pfam" id="PF00163">
    <property type="entry name" value="Ribosomal_S4"/>
    <property type="match status" value="1"/>
</dbReference>
<dbReference type="Pfam" id="PF01479">
    <property type="entry name" value="S4"/>
    <property type="match status" value="1"/>
</dbReference>
<dbReference type="SMART" id="SM01390">
    <property type="entry name" value="Ribosomal_S4"/>
    <property type="match status" value="1"/>
</dbReference>
<dbReference type="SMART" id="SM00363">
    <property type="entry name" value="S4"/>
    <property type="match status" value="1"/>
</dbReference>
<dbReference type="SUPFAM" id="SSF55174">
    <property type="entry name" value="Alpha-L RNA-binding motif"/>
    <property type="match status" value="1"/>
</dbReference>
<dbReference type="PROSITE" id="PS00632">
    <property type="entry name" value="RIBOSOMAL_S4"/>
    <property type="match status" value="1"/>
</dbReference>
<dbReference type="PROSITE" id="PS50889">
    <property type="entry name" value="S4"/>
    <property type="match status" value="1"/>
</dbReference>
<gene>
    <name evidence="1" type="primary">rpsD</name>
    <name type="ordered locus">GK2802</name>
</gene>
<protein>
    <recommendedName>
        <fullName evidence="1">Small ribosomal subunit protein uS4</fullName>
    </recommendedName>
    <alternativeName>
        <fullName evidence="3">30S ribosomal protein S4</fullName>
    </alternativeName>
</protein>